<keyword id="KW-0143">Chaperone</keyword>
<keyword id="KW-0963">Cytoplasm</keyword>
<keyword id="KW-0690">Ribosome biogenesis</keyword>
<keyword id="KW-0698">rRNA processing</keyword>
<protein>
    <recommendedName>
        <fullName evidence="1">Ribosome maturation factor RimM</fullName>
    </recommendedName>
</protein>
<organism>
    <name type="scientific">Yersinia pseudotuberculosis serotype IB (strain PB1/+)</name>
    <dbReference type="NCBI Taxonomy" id="502801"/>
    <lineage>
        <taxon>Bacteria</taxon>
        <taxon>Pseudomonadati</taxon>
        <taxon>Pseudomonadota</taxon>
        <taxon>Gammaproteobacteria</taxon>
        <taxon>Enterobacterales</taxon>
        <taxon>Yersiniaceae</taxon>
        <taxon>Yersinia</taxon>
    </lineage>
</organism>
<name>RIMM_YERPB</name>
<gene>
    <name evidence="1" type="primary">rimM</name>
    <name type="ordered locus">YPTS_0871</name>
</gene>
<sequence>MSKQLNPAVPDQPIVLGKMGSTYGIRGWLRVFSSTENAESIFDYQPWFIQQAGKWQHVELEDWKRHSQDLIIKVKGVDDRDAANLLTNCEIFVDSTQLPALEEDDYYWKDLMGCQVVTTTGYELGKIIDMMETGSNDVMVVKANLKDAFGMKERLVPFLHGQVIKKVDLTAQRVEVDWDPGF</sequence>
<feature type="chain" id="PRO_1000089536" description="Ribosome maturation factor RimM">
    <location>
        <begin position="1"/>
        <end position="182"/>
    </location>
</feature>
<feature type="domain" description="PRC barrel" evidence="1">
    <location>
        <begin position="102"/>
        <end position="182"/>
    </location>
</feature>
<comment type="function">
    <text evidence="1">An accessory protein needed during the final step in the assembly of 30S ribosomal subunit, possibly for assembly of the head region. Essential for efficient processing of 16S rRNA. May be needed both before and after RbfA during the maturation of 16S rRNA. It has affinity for free ribosomal 30S subunits but not for 70S ribosomes.</text>
</comment>
<comment type="subunit">
    <text evidence="1">Binds ribosomal protein uS19.</text>
</comment>
<comment type="subcellular location">
    <subcellularLocation>
        <location evidence="1">Cytoplasm</location>
    </subcellularLocation>
</comment>
<comment type="domain">
    <text evidence="1">The PRC barrel domain binds ribosomal protein uS19.</text>
</comment>
<comment type="similarity">
    <text evidence="1">Belongs to the RimM family.</text>
</comment>
<dbReference type="EMBL" id="CP001048">
    <property type="protein sequence ID" value="ACC87855.1"/>
    <property type="molecule type" value="Genomic_DNA"/>
</dbReference>
<dbReference type="RefSeq" id="WP_011191812.1">
    <property type="nucleotide sequence ID" value="NZ_CP009780.1"/>
</dbReference>
<dbReference type="SMR" id="B2K5Y9"/>
<dbReference type="GeneID" id="49787152"/>
<dbReference type="KEGG" id="ypb:YPTS_0871"/>
<dbReference type="PATRIC" id="fig|502801.10.peg.205"/>
<dbReference type="GO" id="GO:0005737">
    <property type="term" value="C:cytoplasm"/>
    <property type="evidence" value="ECO:0007669"/>
    <property type="project" value="UniProtKB-SubCell"/>
</dbReference>
<dbReference type="GO" id="GO:0005840">
    <property type="term" value="C:ribosome"/>
    <property type="evidence" value="ECO:0007669"/>
    <property type="project" value="InterPro"/>
</dbReference>
<dbReference type="GO" id="GO:0043022">
    <property type="term" value="F:ribosome binding"/>
    <property type="evidence" value="ECO:0007669"/>
    <property type="project" value="InterPro"/>
</dbReference>
<dbReference type="GO" id="GO:0042274">
    <property type="term" value="P:ribosomal small subunit biogenesis"/>
    <property type="evidence" value="ECO:0007669"/>
    <property type="project" value="UniProtKB-UniRule"/>
</dbReference>
<dbReference type="GO" id="GO:0006364">
    <property type="term" value="P:rRNA processing"/>
    <property type="evidence" value="ECO:0007669"/>
    <property type="project" value="UniProtKB-UniRule"/>
</dbReference>
<dbReference type="FunFam" id="2.30.30.240:FF:000001">
    <property type="entry name" value="Ribosome maturation factor RimM"/>
    <property type="match status" value="1"/>
</dbReference>
<dbReference type="FunFam" id="2.40.30.60:FF:000001">
    <property type="entry name" value="Ribosome maturation factor RimM"/>
    <property type="match status" value="1"/>
</dbReference>
<dbReference type="Gene3D" id="2.30.30.240">
    <property type="entry name" value="PRC-barrel domain"/>
    <property type="match status" value="1"/>
</dbReference>
<dbReference type="Gene3D" id="2.40.30.60">
    <property type="entry name" value="RimM"/>
    <property type="match status" value="1"/>
</dbReference>
<dbReference type="HAMAP" id="MF_00014">
    <property type="entry name" value="Ribosome_mat_RimM"/>
    <property type="match status" value="1"/>
</dbReference>
<dbReference type="InterPro" id="IPR011033">
    <property type="entry name" value="PRC_barrel-like_sf"/>
</dbReference>
<dbReference type="InterPro" id="IPR056792">
    <property type="entry name" value="PRC_RimM"/>
</dbReference>
<dbReference type="InterPro" id="IPR011961">
    <property type="entry name" value="RimM"/>
</dbReference>
<dbReference type="InterPro" id="IPR002676">
    <property type="entry name" value="RimM_N"/>
</dbReference>
<dbReference type="InterPro" id="IPR036976">
    <property type="entry name" value="RimM_N_sf"/>
</dbReference>
<dbReference type="InterPro" id="IPR009000">
    <property type="entry name" value="Transl_B-barrel_sf"/>
</dbReference>
<dbReference type="NCBIfam" id="TIGR02273">
    <property type="entry name" value="16S_RimM"/>
    <property type="match status" value="1"/>
</dbReference>
<dbReference type="PANTHER" id="PTHR33692">
    <property type="entry name" value="RIBOSOME MATURATION FACTOR RIMM"/>
    <property type="match status" value="1"/>
</dbReference>
<dbReference type="PANTHER" id="PTHR33692:SF1">
    <property type="entry name" value="RIBOSOME MATURATION FACTOR RIMM"/>
    <property type="match status" value="1"/>
</dbReference>
<dbReference type="Pfam" id="PF24986">
    <property type="entry name" value="PRC_RimM"/>
    <property type="match status" value="1"/>
</dbReference>
<dbReference type="Pfam" id="PF01782">
    <property type="entry name" value="RimM"/>
    <property type="match status" value="1"/>
</dbReference>
<dbReference type="SUPFAM" id="SSF50346">
    <property type="entry name" value="PRC-barrel domain"/>
    <property type="match status" value="1"/>
</dbReference>
<dbReference type="SUPFAM" id="SSF50447">
    <property type="entry name" value="Translation proteins"/>
    <property type="match status" value="1"/>
</dbReference>
<evidence type="ECO:0000255" key="1">
    <source>
        <dbReference type="HAMAP-Rule" id="MF_00014"/>
    </source>
</evidence>
<proteinExistence type="inferred from homology"/>
<accession>B2K5Y9</accession>
<reference key="1">
    <citation type="submission" date="2008-04" db="EMBL/GenBank/DDBJ databases">
        <title>Complete sequence of Yersinia pseudotuberculosis PB1/+.</title>
        <authorList>
            <person name="Copeland A."/>
            <person name="Lucas S."/>
            <person name="Lapidus A."/>
            <person name="Glavina del Rio T."/>
            <person name="Dalin E."/>
            <person name="Tice H."/>
            <person name="Bruce D."/>
            <person name="Goodwin L."/>
            <person name="Pitluck S."/>
            <person name="Munk A.C."/>
            <person name="Brettin T."/>
            <person name="Detter J.C."/>
            <person name="Han C."/>
            <person name="Tapia R."/>
            <person name="Schmutz J."/>
            <person name="Larimer F."/>
            <person name="Land M."/>
            <person name="Hauser L."/>
            <person name="Challacombe J.F."/>
            <person name="Green L."/>
            <person name="Lindler L.E."/>
            <person name="Nikolich M.P."/>
            <person name="Richardson P."/>
        </authorList>
    </citation>
    <scope>NUCLEOTIDE SEQUENCE [LARGE SCALE GENOMIC DNA]</scope>
    <source>
        <strain>PB1/+</strain>
    </source>
</reference>